<keyword id="KW-0240">DNA-directed RNA polymerase</keyword>
<keyword id="KW-0460">Magnesium</keyword>
<keyword id="KW-0479">Metal-binding</keyword>
<keyword id="KW-0548">Nucleotidyltransferase</keyword>
<keyword id="KW-1185">Reference proteome</keyword>
<keyword id="KW-0804">Transcription</keyword>
<keyword id="KW-0808">Transferase</keyword>
<keyword id="KW-0862">Zinc</keyword>
<dbReference type="EC" id="2.7.7.6" evidence="1"/>
<dbReference type="EMBL" id="CP000705">
    <property type="protein sequence ID" value="ABQ83737.1"/>
    <property type="molecule type" value="Genomic_DNA"/>
</dbReference>
<dbReference type="RefSeq" id="WP_003668793.1">
    <property type="nucleotide sequence ID" value="NC_009513.1"/>
</dbReference>
<dbReference type="SMR" id="A5VLL3"/>
<dbReference type="STRING" id="557436.Lreu_1491"/>
<dbReference type="KEGG" id="lre:Lreu_1491"/>
<dbReference type="PATRIC" id="fig|557436.17.peg.132"/>
<dbReference type="eggNOG" id="COG0086">
    <property type="taxonomic scope" value="Bacteria"/>
</dbReference>
<dbReference type="HOGENOM" id="CLU_000524_3_1_9"/>
<dbReference type="Proteomes" id="UP000001991">
    <property type="component" value="Chromosome"/>
</dbReference>
<dbReference type="GO" id="GO:0000428">
    <property type="term" value="C:DNA-directed RNA polymerase complex"/>
    <property type="evidence" value="ECO:0007669"/>
    <property type="project" value="UniProtKB-KW"/>
</dbReference>
<dbReference type="GO" id="GO:0003677">
    <property type="term" value="F:DNA binding"/>
    <property type="evidence" value="ECO:0007669"/>
    <property type="project" value="UniProtKB-UniRule"/>
</dbReference>
<dbReference type="GO" id="GO:0003899">
    <property type="term" value="F:DNA-directed RNA polymerase activity"/>
    <property type="evidence" value="ECO:0007669"/>
    <property type="project" value="UniProtKB-UniRule"/>
</dbReference>
<dbReference type="GO" id="GO:0000287">
    <property type="term" value="F:magnesium ion binding"/>
    <property type="evidence" value="ECO:0007669"/>
    <property type="project" value="UniProtKB-UniRule"/>
</dbReference>
<dbReference type="GO" id="GO:0008270">
    <property type="term" value="F:zinc ion binding"/>
    <property type="evidence" value="ECO:0007669"/>
    <property type="project" value="UniProtKB-UniRule"/>
</dbReference>
<dbReference type="GO" id="GO:0006351">
    <property type="term" value="P:DNA-templated transcription"/>
    <property type="evidence" value="ECO:0007669"/>
    <property type="project" value="UniProtKB-UniRule"/>
</dbReference>
<dbReference type="CDD" id="cd02655">
    <property type="entry name" value="RNAP_beta'_C"/>
    <property type="match status" value="1"/>
</dbReference>
<dbReference type="CDD" id="cd01609">
    <property type="entry name" value="RNAP_beta'_N"/>
    <property type="match status" value="1"/>
</dbReference>
<dbReference type="FunFam" id="1.10.150.390:FF:000002">
    <property type="entry name" value="DNA-directed RNA polymerase subunit beta"/>
    <property type="match status" value="1"/>
</dbReference>
<dbReference type="FunFam" id="4.10.860.120:FF:000001">
    <property type="entry name" value="DNA-directed RNA polymerase subunit beta"/>
    <property type="match status" value="1"/>
</dbReference>
<dbReference type="Gene3D" id="1.10.132.30">
    <property type="match status" value="1"/>
</dbReference>
<dbReference type="Gene3D" id="1.10.150.390">
    <property type="match status" value="1"/>
</dbReference>
<dbReference type="Gene3D" id="1.10.1790.20">
    <property type="match status" value="1"/>
</dbReference>
<dbReference type="Gene3D" id="1.10.40.90">
    <property type="match status" value="1"/>
</dbReference>
<dbReference type="Gene3D" id="2.40.40.20">
    <property type="match status" value="1"/>
</dbReference>
<dbReference type="Gene3D" id="2.40.50.100">
    <property type="match status" value="1"/>
</dbReference>
<dbReference type="Gene3D" id="4.10.860.120">
    <property type="entry name" value="RNA polymerase II, clamp domain"/>
    <property type="match status" value="1"/>
</dbReference>
<dbReference type="Gene3D" id="1.10.274.100">
    <property type="entry name" value="RNA polymerase Rpb1, domain 3"/>
    <property type="match status" value="2"/>
</dbReference>
<dbReference type="HAMAP" id="MF_01322">
    <property type="entry name" value="RNApol_bact_RpoC"/>
    <property type="match status" value="1"/>
</dbReference>
<dbReference type="InterPro" id="IPR045867">
    <property type="entry name" value="DNA-dir_RpoC_beta_prime"/>
</dbReference>
<dbReference type="InterPro" id="IPR012754">
    <property type="entry name" value="DNA-dir_RpoC_beta_prime_bact"/>
</dbReference>
<dbReference type="InterPro" id="IPR000722">
    <property type="entry name" value="RNA_pol_asu"/>
</dbReference>
<dbReference type="InterPro" id="IPR006592">
    <property type="entry name" value="RNA_pol_N"/>
</dbReference>
<dbReference type="InterPro" id="IPR007080">
    <property type="entry name" value="RNA_pol_Rpb1_1"/>
</dbReference>
<dbReference type="InterPro" id="IPR007066">
    <property type="entry name" value="RNA_pol_Rpb1_3"/>
</dbReference>
<dbReference type="InterPro" id="IPR042102">
    <property type="entry name" value="RNA_pol_Rpb1_3_sf"/>
</dbReference>
<dbReference type="InterPro" id="IPR007083">
    <property type="entry name" value="RNA_pol_Rpb1_4"/>
</dbReference>
<dbReference type="InterPro" id="IPR007081">
    <property type="entry name" value="RNA_pol_Rpb1_5"/>
</dbReference>
<dbReference type="InterPro" id="IPR044893">
    <property type="entry name" value="RNA_pol_Rpb1_clamp_domain"/>
</dbReference>
<dbReference type="InterPro" id="IPR038120">
    <property type="entry name" value="Rpb1_funnel_sf"/>
</dbReference>
<dbReference type="NCBIfam" id="TIGR02386">
    <property type="entry name" value="rpoC_TIGR"/>
    <property type="match status" value="1"/>
</dbReference>
<dbReference type="PANTHER" id="PTHR19376">
    <property type="entry name" value="DNA-DIRECTED RNA POLYMERASE"/>
    <property type="match status" value="1"/>
</dbReference>
<dbReference type="PANTHER" id="PTHR19376:SF54">
    <property type="entry name" value="DNA-DIRECTED RNA POLYMERASE SUBUNIT BETA"/>
    <property type="match status" value="1"/>
</dbReference>
<dbReference type="Pfam" id="PF04997">
    <property type="entry name" value="RNA_pol_Rpb1_1"/>
    <property type="match status" value="1"/>
</dbReference>
<dbReference type="Pfam" id="PF00623">
    <property type="entry name" value="RNA_pol_Rpb1_2"/>
    <property type="match status" value="2"/>
</dbReference>
<dbReference type="Pfam" id="PF04983">
    <property type="entry name" value="RNA_pol_Rpb1_3"/>
    <property type="match status" value="1"/>
</dbReference>
<dbReference type="Pfam" id="PF05000">
    <property type="entry name" value="RNA_pol_Rpb1_4"/>
    <property type="match status" value="1"/>
</dbReference>
<dbReference type="Pfam" id="PF04998">
    <property type="entry name" value="RNA_pol_Rpb1_5"/>
    <property type="match status" value="1"/>
</dbReference>
<dbReference type="SMART" id="SM00663">
    <property type="entry name" value="RPOLA_N"/>
    <property type="match status" value="1"/>
</dbReference>
<dbReference type="SUPFAM" id="SSF64484">
    <property type="entry name" value="beta and beta-prime subunits of DNA dependent RNA-polymerase"/>
    <property type="match status" value="1"/>
</dbReference>
<organism>
    <name type="scientific">Limosilactobacillus reuteri (strain DSM 20016)</name>
    <name type="common">Lactobacillus reuteri</name>
    <dbReference type="NCBI Taxonomy" id="557436"/>
    <lineage>
        <taxon>Bacteria</taxon>
        <taxon>Bacillati</taxon>
        <taxon>Bacillota</taxon>
        <taxon>Bacilli</taxon>
        <taxon>Lactobacillales</taxon>
        <taxon>Lactobacillaceae</taxon>
        <taxon>Limosilactobacillus</taxon>
    </lineage>
</organism>
<feature type="chain" id="PRO_1000067555" description="DNA-directed RNA polymerase subunit beta'">
    <location>
        <begin position="1"/>
        <end position="1211"/>
    </location>
</feature>
<feature type="binding site" evidence="1">
    <location>
        <position position="60"/>
    </location>
    <ligand>
        <name>Zn(2+)</name>
        <dbReference type="ChEBI" id="CHEBI:29105"/>
        <label>1</label>
    </ligand>
</feature>
<feature type="binding site" evidence="1">
    <location>
        <position position="62"/>
    </location>
    <ligand>
        <name>Zn(2+)</name>
        <dbReference type="ChEBI" id="CHEBI:29105"/>
        <label>1</label>
    </ligand>
</feature>
<feature type="binding site" evidence="1">
    <location>
        <position position="75"/>
    </location>
    <ligand>
        <name>Zn(2+)</name>
        <dbReference type="ChEBI" id="CHEBI:29105"/>
        <label>1</label>
    </ligand>
</feature>
<feature type="binding site" evidence="1">
    <location>
        <position position="78"/>
    </location>
    <ligand>
        <name>Zn(2+)</name>
        <dbReference type="ChEBI" id="CHEBI:29105"/>
        <label>1</label>
    </ligand>
</feature>
<feature type="binding site" evidence="1">
    <location>
        <position position="449"/>
    </location>
    <ligand>
        <name>Mg(2+)</name>
        <dbReference type="ChEBI" id="CHEBI:18420"/>
    </ligand>
</feature>
<feature type="binding site" evidence="1">
    <location>
        <position position="451"/>
    </location>
    <ligand>
        <name>Mg(2+)</name>
        <dbReference type="ChEBI" id="CHEBI:18420"/>
    </ligand>
</feature>
<feature type="binding site" evidence="1">
    <location>
        <position position="453"/>
    </location>
    <ligand>
        <name>Mg(2+)</name>
        <dbReference type="ChEBI" id="CHEBI:18420"/>
    </ligand>
</feature>
<feature type="binding site" evidence="1">
    <location>
        <position position="818"/>
    </location>
    <ligand>
        <name>Zn(2+)</name>
        <dbReference type="ChEBI" id="CHEBI:29105"/>
        <label>2</label>
    </ligand>
</feature>
<feature type="binding site" evidence="1">
    <location>
        <position position="892"/>
    </location>
    <ligand>
        <name>Zn(2+)</name>
        <dbReference type="ChEBI" id="CHEBI:29105"/>
        <label>2</label>
    </ligand>
</feature>
<feature type="binding site" evidence="1">
    <location>
        <position position="899"/>
    </location>
    <ligand>
        <name>Zn(2+)</name>
        <dbReference type="ChEBI" id="CHEBI:29105"/>
        <label>2</label>
    </ligand>
</feature>
<feature type="binding site" evidence="1">
    <location>
        <position position="902"/>
    </location>
    <ligand>
        <name>Zn(2+)</name>
        <dbReference type="ChEBI" id="CHEBI:29105"/>
        <label>2</label>
    </ligand>
</feature>
<comment type="function">
    <text evidence="1">DNA-dependent RNA polymerase catalyzes the transcription of DNA into RNA using the four ribonucleoside triphosphates as substrates.</text>
</comment>
<comment type="catalytic activity">
    <reaction evidence="1">
        <text>RNA(n) + a ribonucleoside 5'-triphosphate = RNA(n+1) + diphosphate</text>
        <dbReference type="Rhea" id="RHEA:21248"/>
        <dbReference type="Rhea" id="RHEA-COMP:14527"/>
        <dbReference type="Rhea" id="RHEA-COMP:17342"/>
        <dbReference type="ChEBI" id="CHEBI:33019"/>
        <dbReference type="ChEBI" id="CHEBI:61557"/>
        <dbReference type="ChEBI" id="CHEBI:140395"/>
        <dbReference type="EC" id="2.7.7.6"/>
    </reaction>
</comment>
<comment type="cofactor">
    <cofactor evidence="1">
        <name>Mg(2+)</name>
        <dbReference type="ChEBI" id="CHEBI:18420"/>
    </cofactor>
    <text evidence="1">Binds 1 Mg(2+) ion per subunit.</text>
</comment>
<comment type="cofactor">
    <cofactor evidence="1">
        <name>Zn(2+)</name>
        <dbReference type="ChEBI" id="CHEBI:29105"/>
    </cofactor>
    <text evidence="1">Binds 2 Zn(2+) ions per subunit.</text>
</comment>
<comment type="subunit">
    <text evidence="1">The RNAP catalytic core consists of 2 alpha, 1 beta, 1 beta' and 1 omega subunit. When a sigma factor is associated with the core the holoenzyme is formed, which can initiate transcription.</text>
</comment>
<comment type="similarity">
    <text evidence="1">Belongs to the RNA polymerase beta' chain family.</text>
</comment>
<evidence type="ECO:0000255" key="1">
    <source>
        <dbReference type="HAMAP-Rule" id="MF_01322"/>
    </source>
</evidence>
<protein>
    <recommendedName>
        <fullName evidence="1">DNA-directed RNA polymerase subunit beta'</fullName>
        <shortName evidence="1">RNAP subunit beta'</shortName>
        <ecNumber evidence="1">2.7.7.6</ecNumber>
    </recommendedName>
    <alternativeName>
        <fullName evidence="1">RNA polymerase subunit beta'</fullName>
    </alternativeName>
    <alternativeName>
        <fullName evidence="1">Transcriptase subunit beta'</fullName>
    </alternativeName>
</protein>
<proteinExistence type="inferred from homology"/>
<name>RPOC_LIMRD</name>
<reference key="1">
    <citation type="journal article" date="2011" name="PLoS Genet.">
        <title>The evolution of host specialization in the vertebrate gut symbiont Lactobacillus reuteri.</title>
        <authorList>
            <person name="Frese S.A."/>
            <person name="Benson A.K."/>
            <person name="Tannock G.W."/>
            <person name="Loach D.M."/>
            <person name="Kim J."/>
            <person name="Zhang M."/>
            <person name="Oh P.L."/>
            <person name="Heng N.C."/>
            <person name="Patil P.B."/>
            <person name="Juge N."/>
            <person name="Mackenzie D.A."/>
            <person name="Pearson B.M."/>
            <person name="Lapidus A."/>
            <person name="Dalin E."/>
            <person name="Tice H."/>
            <person name="Goltsman E."/>
            <person name="Land M."/>
            <person name="Hauser L."/>
            <person name="Ivanova N."/>
            <person name="Kyrpides N.C."/>
            <person name="Walter J."/>
        </authorList>
    </citation>
    <scope>NUCLEOTIDE SEQUENCE [LARGE SCALE GENOMIC DNA]</scope>
    <source>
        <strain>DSM 20016</strain>
    </source>
</reference>
<sequence>MIDVNKFESMQIGLASPDKIRSWSYGEVKKPETINYRTLKPEKQGLFDERIFGPTKDYECACGKYKRIRYKGRVCDRCGVEVTSAKVRRERMGHIELAAPVSHIWYFKGIPSRMGLVLDMSPRSLEEVIYFASYVVLDPGDTPLEKKQLLTEAEYRDKKAEYGDRFKAEMGAAAIQKLLADVDLEKEAAELKEELKEATGQKRTRAIRRLDILEAFIKSGNKPEWMVMDVIPVMPPDLRPMVQLEGGRFATSDLNDLYRRVINRNNRLKRLLKLQAPGIIVQNEKRMLQEAVDALIDNGRRGRPVAGPGNRPLKSLSHLLKGKQGRFRQNLLGKRVDYSGRSVIDVGPSLKLNQMGLPVPMALELFKPFIMHELVKRGLSANVKSAKRKIDRSDDDVFDVLEDVIKEHPVLLNRAPTLHRLGIQAFEPILVSGKSMRLHPLVCSAYNADFDGDQMAIHVPLSDEAQAEARLLMLAAHHILSPRDGEPIVSPSQDMVIGNYYMTTEDKGREGEGMIFKDTDEAELAYRNDYVSLQTRVGVQVSAFPEKPFTDDQRGKIMVTTVGKLLFNRIMPKDFAYINEPTDANIQNGVDDRFFLEPGQDIHEYLENAPLVPPFKKGFLSDLIAEVYKRYKVTKTSQFLDRIKDLGYYESTISGLTTAMSDIHDLPEKPEILDKAQKQVTLITKQFRRGLITDDERYERVIGAWNDAKDEVQNKLIEHMDIHNPINMMSDSGARGNISNFTQLAGMRGLMASPNGKIMELPVKSNFYEGLSVLEMFISSHGARKGMTDTALKTANSGYLTRRLVDVAQDVVVREKDCGTDRGLEVTAITNGNEMIEPLYDRIMGRYTMKSVFDPKTGEKIVGKNVLIDEEMAQKIVDAGVKKVTIRSAFTCNTEHGVCERCYGRNAATGDRVEAGEAVGTVAAQSIGEPGTQLTLRNFHTGGVAGNDDITQGLPRIQEIVEARNPKGRATITEVTGEVVSIEENPAERTKDITIKGETDTRTYTLPITARMKVAEGDFIHRGAPLNEGSIDPKELIQVRDVLSTETYLLSQVQGVYRMQGIDLLDKHVEIMIRQMMRKVRVMDPGDTDLLPGQLMDISQFRDANKDTLVAGNIPATARPVILGITKAALETNSFLSAASFQETTRVLTDAAIRGKNDPLVGLKENVIIGKIIPAGTGMSAYRNIKPKEVSVAAYSIKDIEAKLKEEDKQN</sequence>
<accession>A5VLL3</accession>
<gene>
    <name evidence="1" type="primary">rpoC</name>
    <name type="ordered locus">Lreu_1491</name>
</gene>